<name>OVGP1_MOUSE</name>
<reference key="1">
    <citation type="journal article" date="1995" name="Biol. Reprod.">
        <title>Molecular cloning and characterization of a mouse oviduct-specific glycoprotein.</title>
        <authorList>
            <person name="Sendai Y."/>
            <person name="Komiya H."/>
            <person name="Suzuki K."/>
            <person name="Onuma T."/>
            <person name="Kikuchi M."/>
            <person name="Hoshi H."/>
            <person name="Araki Y."/>
        </authorList>
    </citation>
    <scope>NUCLEOTIDE SEQUENCE [MRNA]</scope>
    <source>
        <strain>ICR</strain>
        <tissue>Oviduct</tissue>
    </source>
</reference>
<protein>
    <recommendedName>
        <fullName>Oviduct-specific glycoprotein</fullName>
    </recommendedName>
    <alternativeName>
        <fullName>Estrogen-dependent oviduct protein</fullName>
    </alternativeName>
    <alternativeName>
        <fullName>Oviductal glycoprotein</fullName>
    </alternativeName>
    <alternativeName>
        <fullName>Oviductin</fullName>
    </alternativeName>
</protein>
<dbReference type="EMBL" id="D32137">
    <property type="protein sequence ID" value="BAA06863.1"/>
    <property type="molecule type" value="mRNA"/>
</dbReference>
<dbReference type="CCDS" id="CCDS17716.1"/>
<dbReference type="RefSeq" id="NP_031722.1">
    <property type="nucleotide sequence ID" value="NM_007696.2"/>
</dbReference>
<dbReference type="SMR" id="Q62010"/>
<dbReference type="FunCoup" id="Q62010">
    <property type="interactions" value="13"/>
</dbReference>
<dbReference type="STRING" id="10090.ENSMUSP00000000573"/>
<dbReference type="CAZy" id="GH18">
    <property type="family name" value="Glycoside Hydrolase Family 18"/>
</dbReference>
<dbReference type="GlyCosmos" id="Q62010">
    <property type="glycosylation" value="3 sites, No reported glycans"/>
</dbReference>
<dbReference type="GlyGen" id="Q62010">
    <property type="glycosylation" value="4 sites, 1 O-linked glycan (1 site)"/>
</dbReference>
<dbReference type="iPTMnet" id="Q62010"/>
<dbReference type="PhosphoSitePlus" id="Q62010"/>
<dbReference type="jPOST" id="Q62010"/>
<dbReference type="PaxDb" id="10090-ENSMUSP00000000573"/>
<dbReference type="ProteomicsDB" id="294411"/>
<dbReference type="Antibodypedia" id="33809">
    <property type="antibodies" value="118 antibodies from 27 providers"/>
</dbReference>
<dbReference type="DNASU" id="12659"/>
<dbReference type="Ensembl" id="ENSMUST00000000573.9">
    <property type="protein sequence ID" value="ENSMUSP00000000573.3"/>
    <property type="gene ID" value="ENSMUSG00000074340.10"/>
</dbReference>
<dbReference type="GeneID" id="12659"/>
<dbReference type="KEGG" id="mmu:12659"/>
<dbReference type="UCSC" id="uc008qvq.1">
    <property type="organism name" value="mouse"/>
</dbReference>
<dbReference type="AGR" id="MGI:106661"/>
<dbReference type="CTD" id="5016"/>
<dbReference type="MGI" id="MGI:106661">
    <property type="gene designation" value="Ovgp1"/>
</dbReference>
<dbReference type="VEuPathDB" id="HostDB:ENSMUSG00000074340"/>
<dbReference type="eggNOG" id="KOG2806">
    <property type="taxonomic scope" value="Eukaryota"/>
</dbReference>
<dbReference type="GeneTree" id="ENSGT00940000162223"/>
<dbReference type="HOGENOM" id="CLU_002833_12_0_1"/>
<dbReference type="InParanoid" id="Q62010"/>
<dbReference type="OMA" id="VKREHFG"/>
<dbReference type="OrthoDB" id="76388at2759"/>
<dbReference type="PhylomeDB" id="Q62010"/>
<dbReference type="TreeFam" id="TF315610"/>
<dbReference type="Reactome" id="R-MMU-2534343">
    <property type="pathway name" value="Interaction With Cumulus Cells And The Zona Pellucida"/>
</dbReference>
<dbReference type="BioGRID-ORCS" id="12659">
    <property type="hits" value="1 hit in 77 CRISPR screens"/>
</dbReference>
<dbReference type="PRO" id="PR:Q62010"/>
<dbReference type="Proteomes" id="UP000000589">
    <property type="component" value="Chromosome 3"/>
</dbReference>
<dbReference type="RNAct" id="Q62010">
    <property type="molecule type" value="protein"/>
</dbReference>
<dbReference type="Bgee" id="ENSMUSG00000074340">
    <property type="expression patterns" value="Expressed in superior surface of tongue and 217 other cell types or tissues"/>
</dbReference>
<dbReference type="ExpressionAtlas" id="Q62010">
    <property type="expression patterns" value="baseline and differential"/>
</dbReference>
<dbReference type="GO" id="GO:0035805">
    <property type="term" value="C:egg coat"/>
    <property type="evidence" value="ECO:0000314"/>
    <property type="project" value="MGI"/>
</dbReference>
<dbReference type="GO" id="GO:0015630">
    <property type="term" value="C:microtubule cytoskeleton"/>
    <property type="evidence" value="ECO:0007669"/>
    <property type="project" value="Ensembl"/>
</dbReference>
<dbReference type="GO" id="GO:0098595">
    <property type="term" value="C:perivitelline space"/>
    <property type="evidence" value="ECO:0000314"/>
    <property type="project" value="MGI"/>
</dbReference>
<dbReference type="GO" id="GO:0030133">
    <property type="term" value="C:transport vesicle"/>
    <property type="evidence" value="ECO:0007669"/>
    <property type="project" value="UniProtKB-SubCell"/>
</dbReference>
<dbReference type="GO" id="GO:0008061">
    <property type="term" value="F:chitin binding"/>
    <property type="evidence" value="ECO:0007669"/>
    <property type="project" value="InterPro"/>
</dbReference>
<dbReference type="GO" id="GO:0005975">
    <property type="term" value="P:carbohydrate metabolic process"/>
    <property type="evidence" value="ECO:0007669"/>
    <property type="project" value="InterPro"/>
</dbReference>
<dbReference type="GO" id="GO:2000360">
    <property type="term" value="P:negative regulation of binding of sperm to zona pellucida"/>
    <property type="evidence" value="ECO:0000314"/>
    <property type="project" value="MGI"/>
</dbReference>
<dbReference type="GO" id="GO:0007338">
    <property type="term" value="P:single fertilization"/>
    <property type="evidence" value="ECO:0007669"/>
    <property type="project" value="UniProtKB-KW"/>
</dbReference>
<dbReference type="CDD" id="cd02872">
    <property type="entry name" value="GH18_chitolectin_chitotriosidase"/>
    <property type="match status" value="1"/>
</dbReference>
<dbReference type="FunFam" id="3.20.20.80:FF:000007">
    <property type="entry name" value="Acidic mammalian chitinase"/>
    <property type="match status" value="1"/>
</dbReference>
<dbReference type="FunFam" id="3.10.50.10:FF:000001">
    <property type="entry name" value="Chitinase 3-like 1"/>
    <property type="match status" value="1"/>
</dbReference>
<dbReference type="Gene3D" id="3.10.50.10">
    <property type="match status" value="1"/>
</dbReference>
<dbReference type="Gene3D" id="3.20.20.80">
    <property type="entry name" value="Glycosidases"/>
    <property type="match status" value="1"/>
</dbReference>
<dbReference type="InterPro" id="IPR011583">
    <property type="entry name" value="Chitinase_II/V-like_cat"/>
</dbReference>
<dbReference type="InterPro" id="IPR029070">
    <property type="entry name" value="Chitinase_insertion_sf"/>
</dbReference>
<dbReference type="InterPro" id="IPR001223">
    <property type="entry name" value="Glyco_hydro18_cat"/>
</dbReference>
<dbReference type="InterPro" id="IPR017853">
    <property type="entry name" value="Glycoside_hydrolase_SF"/>
</dbReference>
<dbReference type="InterPro" id="IPR050314">
    <property type="entry name" value="Glycosyl_Hydrlase_18"/>
</dbReference>
<dbReference type="PANTHER" id="PTHR11177">
    <property type="entry name" value="CHITINASE"/>
    <property type="match status" value="1"/>
</dbReference>
<dbReference type="PANTHER" id="PTHR11177:SF385">
    <property type="entry name" value="OVIDUCT-SPECIFIC GLYCOPROTEIN"/>
    <property type="match status" value="1"/>
</dbReference>
<dbReference type="Pfam" id="PF00704">
    <property type="entry name" value="Glyco_hydro_18"/>
    <property type="match status" value="1"/>
</dbReference>
<dbReference type="SMART" id="SM00636">
    <property type="entry name" value="Glyco_18"/>
    <property type="match status" value="1"/>
</dbReference>
<dbReference type="SUPFAM" id="SSF51445">
    <property type="entry name" value="(Trans)glycosidases"/>
    <property type="match status" value="1"/>
</dbReference>
<dbReference type="SUPFAM" id="SSF54556">
    <property type="entry name" value="Chitinase insertion domain"/>
    <property type="match status" value="1"/>
</dbReference>
<dbReference type="SUPFAM" id="SSF58104">
    <property type="entry name" value="Methyl-accepting chemotaxis protein (MCP) signaling domain"/>
    <property type="match status" value="1"/>
</dbReference>
<dbReference type="PROSITE" id="PS51910">
    <property type="entry name" value="GH18_2"/>
    <property type="match status" value="1"/>
</dbReference>
<sequence>MGRLLLLAGLVLLMKHSDGTAYKLVCYFTNWAHSRPGPASIMPHDLDPFLCTHLIFAFASMSNNQIVAKNLQDENVLYPEFNKLKERNRELKTLLSIGGWNFGTSRFTAMLSTLANREKFIDSVISFLRIHGFDGLDLFFLYPGLRGSPPHDRWNFLFLIEELQFAFEREALLTQHPRLLLSAAVSGIPSIIHTSYDALLLGRRLDFINVLSYDLHGSWEKFTGHNSPLFSLPEDSKSSAYAMNYWRKLGTPADKLIMGFPTYGRNFYLLKESKNGLQTASMGPASPGKYTKQAGFLAYYEVCSFVQRAKKHWIDYQYVPYAFKGKEWLGYDDTISFSYKAMYVKREHFGGAMVWTLDMDDVRGTFCGNGPFPLVHILNELLVQTESNSTPLPQFWFTSSVNASGPGSENTALTEVLTTDTIKILPPGGEAMTTEVHRRYENMTTVPSDGSVTPGGTASPRKHAVTPENNTMAAEAKTMSTLDFFSKTTTGVSKTTTGISKTTTGVSKTTTGVSKATAGISKTIPEISKATAGVSKTTTGVSKTTTGISKTITGVSKTTTGISKTTTGISKTTTGVSKITTGVSKTTTGISKTTTGISQTTTGISKTTTDISKTTTGISKTTPGISKTTPGMTVIVQTQANEAETTATMDHQSVTPTEMDTTLFYLKTMTPSEKETSRKKTMVLEKATVSPREMSATPNGQSKTLKWASLITEVETYSQDG</sequence>
<proteinExistence type="evidence at transcript level"/>
<accession>Q62010</accession>
<organism>
    <name type="scientific">Mus musculus</name>
    <name type="common">Mouse</name>
    <dbReference type="NCBI Taxonomy" id="10090"/>
    <lineage>
        <taxon>Eukaryota</taxon>
        <taxon>Metazoa</taxon>
        <taxon>Chordata</taxon>
        <taxon>Craniata</taxon>
        <taxon>Vertebrata</taxon>
        <taxon>Euteleostomi</taxon>
        <taxon>Mammalia</taxon>
        <taxon>Eutheria</taxon>
        <taxon>Euarchontoglires</taxon>
        <taxon>Glires</taxon>
        <taxon>Rodentia</taxon>
        <taxon>Myomorpha</taxon>
        <taxon>Muroidea</taxon>
        <taxon>Muridae</taxon>
        <taxon>Murinae</taxon>
        <taxon>Mus</taxon>
        <taxon>Mus</taxon>
    </lineage>
</organism>
<gene>
    <name type="primary">Ovgp1</name>
    <name type="synonym">Chit5</name>
    <name type="synonym">Ogp</name>
</gene>
<feature type="signal peptide" evidence="1">
    <location>
        <begin position="1"/>
        <end position="21"/>
    </location>
</feature>
<feature type="chain" id="PRO_0000011975" description="Oviduct-specific glycoprotein">
    <location>
        <begin position="22"/>
        <end position="721"/>
    </location>
</feature>
<feature type="domain" description="GH18" evidence="2">
    <location>
        <begin position="22"/>
        <end position="385"/>
    </location>
</feature>
<feature type="repeat" description="1">
    <location>
        <begin position="486"/>
        <end position="492"/>
    </location>
</feature>
<feature type="repeat" description="2">
    <location>
        <begin position="493"/>
        <end position="499"/>
    </location>
</feature>
<feature type="repeat" description="3">
    <location>
        <begin position="500"/>
        <end position="506"/>
    </location>
</feature>
<feature type="repeat" description="4">
    <location>
        <begin position="507"/>
        <end position="513"/>
    </location>
</feature>
<feature type="repeat" description="5">
    <location>
        <begin position="514"/>
        <end position="520"/>
    </location>
</feature>
<feature type="repeat" description="6">
    <location>
        <begin position="521"/>
        <end position="527"/>
    </location>
</feature>
<feature type="repeat" description="7">
    <location>
        <begin position="528"/>
        <end position="534"/>
    </location>
</feature>
<feature type="repeat" description="8">
    <location>
        <begin position="535"/>
        <end position="541"/>
    </location>
</feature>
<feature type="repeat" description="9">
    <location>
        <begin position="542"/>
        <end position="548"/>
    </location>
</feature>
<feature type="repeat" description="10">
    <location>
        <begin position="549"/>
        <end position="555"/>
    </location>
</feature>
<feature type="repeat" description="11">
    <location>
        <begin position="556"/>
        <end position="562"/>
    </location>
</feature>
<feature type="repeat" description="12">
    <location>
        <begin position="563"/>
        <end position="569"/>
    </location>
</feature>
<feature type="repeat" description="13">
    <location>
        <begin position="570"/>
        <end position="576"/>
    </location>
</feature>
<feature type="repeat" description="14">
    <location>
        <begin position="577"/>
        <end position="583"/>
    </location>
</feature>
<feature type="repeat" description="15">
    <location>
        <begin position="584"/>
        <end position="590"/>
    </location>
</feature>
<feature type="repeat" description="16">
    <location>
        <begin position="591"/>
        <end position="597"/>
    </location>
</feature>
<feature type="repeat" description="17">
    <location>
        <begin position="598"/>
        <end position="604"/>
    </location>
</feature>
<feature type="repeat" description="18">
    <location>
        <begin position="605"/>
        <end position="611"/>
    </location>
</feature>
<feature type="repeat" description="19">
    <location>
        <begin position="612"/>
        <end position="618"/>
    </location>
</feature>
<feature type="repeat" description="20">
    <location>
        <begin position="619"/>
        <end position="625"/>
    </location>
</feature>
<feature type="repeat" description="21">
    <location>
        <begin position="626"/>
        <end position="632"/>
    </location>
</feature>
<feature type="region of interest" description="Disordered" evidence="3">
    <location>
        <begin position="444"/>
        <end position="465"/>
    </location>
</feature>
<feature type="region of interest" description="21 X 7 AA tandem repeats of S-K-[TAI]-[TI]-[TAP]-[GED]-[IVM]">
    <location>
        <begin position="486"/>
        <end position="632"/>
    </location>
</feature>
<feature type="compositionally biased region" description="Polar residues" evidence="3">
    <location>
        <begin position="444"/>
        <end position="456"/>
    </location>
</feature>
<feature type="binding site" evidence="2">
    <location>
        <begin position="71"/>
        <end position="72"/>
    </location>
    <ligand>
        <name>chitin</name>
        <dbReference type="ChEBI" id="CHEBI:17029"/>
    </ligand>
</feature>
<feature type="binding site" evidence="2">
    <location>
        <begin position="98"/>
        <end position="101"/>
    </location>
    <ligand>
        <name>chitin</name>
        <dbReference type="ChEBI" id="CHEBI:17029"/>
    </ligand>
</feature>
<feature type="binding site" evidence="2">
    <location>
        <position position="142"/>
    </location>
    <ligand>
        <name>chitin</name>
        <dbReference type="ChEBI" id="CHEBI:17029"/>
    </ligand>
</feature>
<feature type="binding site" evidence="2">
    <location>
        <begin position="211"/>
        <end position="214"/>
    </location>
    <ligand>
        <name>chitin</name>
        <dbReference type="ChEBI" id="CHEBI:17029"/>
    </ligand>
</feature>
<feature type="binding site" evidence="2">
    <location>
        <position position="355"/>
    </location>
    <ligand>
        <name>chitin</name>
        <dbReference type="ChEBI" id="CHEBI:17029"/>
    </ligand>
</feature>
<feature type="glycosylation site" description="N-linked (GlcNAc...) asparagine" evidence="1">
    <location>
        <position position="402"/>
    </location>
</feature>
<feature type="glycosylation site" description="N-linked (GlcNAc...) asparagine" evidence="1">
    <location>
        <position position="442"/>
    </location>
</feature>
<feature type="glycosylation site" description="N-linked (GlcNAc...) asparagine" evidence="1">
    <location>
        <position position="469"/>
    </location>
</feature>
<feature type="disulfide bond" evidence="2">
    <location>
        <begin position="26"/>
        <end position="51"/>
    </location>
</feature>
<comment type="function">
    <text>Binds to oocyte zona pellucida in vivo. May play a role in the fertilization process and/or early embryonic development.</text>
</comment>
<comment type="subcellular location">
    <subcellularLocation>
        <location>Cytoplasmic vesicle</location>
        <location>Secretory vesicle</location>
    </subcellularLocation>
    <text>Secretory granules.</text>
</comment>
<comment type="tissue specificity">
    <text>Epithelial cells of the oviduct.</text>
</comment>
<comment type="similarity">
    <text evidence="4">Belongs to the glycosyl hydrolase 18 family.</text>
</comment>
<keyword id="KW-0968">Cytoplasmic vesicle</keyword>
<keyword id="KW-1015">Disulfide bond</keyword>
<keyword id="KW-0278">Fertilization</keyword>
<keyword id="KW-0325">Glycoprotein</keyword>
<keyword id="KW-1185">Reference proteome</keyword>
<keyword id="KW-0677">Repeat</keyword>
<keyword id="KW-0732">Signal</keyword>
<evidence type="ECO:0000255" key="1"/>
<evidence type="ECO:0000255" key="2">
    <source>
        <dbReference type="PROSITE-ProRule" id="PRU01258"/>
    </source>
</evidence>
<evidence type="ECO:0000256" key="3">
    <source>
        <dbReference type="SAM" id="MobiDB-lite"/>
    </source>
</evidence>
<evidence type="ECO:0000305" key="4"/>